<proteinExistence type="inferred from homology"/>
<sequence length="309" mass="33454">MPLTHIRLLLNGKKATNVDIRQSVIALREQGHTIDVRVSWESADMLRFITEAIADNVGRVVIGGGDGSLNEAVNALMQQPQQDHKLEIAVLPLGTANDFATACGISNIIQSTLELAIHGDSYPIDIIRANNNYFINAAVAGFGAQVTAETPTELKDFLGGGAYTLVGLAKALGFKPYQGSITTDKGTFNGDIVVGAICNNKQAGGGQMLAPNALIDDGLMDITLLKSFSTFDIPVVLDEIQAMSHEAKFCYHFQTRWLEIDFPIKLPLNLDGEPYPTKKMRFEVLPKAIQFVLPPNCPCLVQSTQKSGI</sequence>
<evidence type="ECO:0000255" key="1">
    <source>
        <dbReference type="HAMAP-Rule" id="MF_01377"/>
    </source>
</evidence>
<reference key="1">
    <citation type="submission" date="2006-08" db="EMBL/GenBank/DDBJ databases">
        <title>Complete sequence of Shewanella frigidimarina NCIMB 400.</title>
        <authorList>
            <consortium name="US DOE Joint Genome Institute"/>
            <person name="Copeland A."/>
            <person name="Lucas S."/>
            <person name="Lapidus A."/>
            <person name="Barry K."/>
            <person name="Detter J.C."/>
            <person name="Glavina del Rio T."/>
            <person name="Hammon N."/>
            <person name="Israni S."/>
            <person name="Dalin E."/>
            <person name="Tice H."/>
            <person name="Pitluck S."/>
            <person name="Fredrickson J.K."/>
            <person name="Kolker E."/>
            <person name="McCuel L.A."/>
            <person name="DiChristina T."/>
            <person name="Nealson K.H."/>
            <person name="Newman D."/>
            <person name="Tiedje J.M."/>
            <person name="Zhou J."/>
            <person name="Romine M.F."/>
            <person name="Culley D.E."/>
            <person name="Serres M."/>
            <person name="Chertkov O."/>
            <person name="Brettin T."/>
            <person name="Bruce D."/>
            <person name="Han C."/>
            <person name="Tapia R."/>
            <person name="Gilna P."/>
            <person name="Schmutz J."/>
            <person name="Larimer F."/>
            <person name="Land M."/>
            <person name="Hauser L."/>
            <person name="Kyrpides N."/>
            <person name="Mikhailova N."/>
            <person name="Richardson P."/>
        </authorList>
    </citation>
    <scope>NUCLEOTIDE SEQUENCE [LARGE SCALE GENOMIC DNA]</scope>
    <source>
        <strain>NCIMB 400</strain>
    </source>
</reference>
<dbReference type="EC" id="2.7.1.-" evidence="1"/>
<dbReference type="EMBL" id="CP000447">
    <property type="protein sequence ID" value="ABI71998.1"/>
    <property type="molecule type" value="Genomic_DNA"/>
</dbReference>
<dbReference type="RefSeq" id="WP_011637608.1">
    <property type="nucleotide sequence ID" value="NC_008345.1"/>
</dbReference>
<dbReference type="SMR" id="Q081R7"/>
<dbReference type="STRING" id="318167.Sfri_2152"/>
<dbReference type="KEGG" id="sfr:Sfri_2152"/>
<dbReference type="eggNOG" id="COG1597">
    <property type="taxonomic scope" value="Bacteria"/>
</dbReference>
<dbReference type="HOGENOM" id="CLU_045532_1_1_6"/>
<dbReference type="OrthoDB" id="142078at2"/>
<dbReference type="Proteomes" id="UP000000684">
    <property type="component" value="Chromosome"/>
</dbReference>
<dbReference type="GO" id="GO:0005737">
    <property type="term" value="C:cytoplasm"/>
    <property type="evidence" value="ECO:0007669"/>
    <property type="project" value="UniProtKB-SubCell"/>
</dbReference>
<dbReference type="GO" id="GO:0005886">
    <property type="term" value="C:plasma membrane"/>
    <property type="evidence" value="ECO:0007669"/>
    <property type="project" value="TreeGrafter"/>
</dbReference>
<dbReference type="GO" id="GO:0005524">
    <property type="term" value="F:ATP binding"/>
    <property type="evidence" value="ECO:0007669"/>
    <property type="project" value="UniProtKB-UniRule"/>
</dbReference>
<dbReference type="GO" id="GO:0001727">
    <property type="term" value="F:lipid kinase activity"/>
    <property type="evidence" value="ECO:0007669"/>
    <property type="project" value="UniProtKB-UniRule"/>
</dbReference>
<dbReference type="GO" id="GO:0000287">
    <property type="term" value="F:magnesium ion binding"/>
    <property type="evidence" value="ECO:0007669"/>
    <property type="project" value="UniProtKB-UniRule"/>
</dbReference>
<dbReference type="GO" id="GO:0008654">
    <property type="term" value="P:phospholipid biosynthetic process"/>
    <property type="evidence" value="ECO:0007669"/>
    <property type="project" value="UniProtKB-UniRule"/>
</dbReference>
<dbReference type="Gene3D" id="2.60.200.40">
    <property type="match status" value="1"/>
</dbReference>
<dbReference type="Gene3D" id="3.40.50.10330">
    <property type="entry name" value="Probable inorganic polyphosphate/atp-NAD kinase, domain 1"/>
    <property type="match status" value="1"/>
</dbReference>
<dbReference type="HAMAP" id="MF_01377">
    <property type="entry name" value="YegS"/>
    <property type="match status" value="1"/>
</dbReference>
<dbReference type="InterPro" id="IPR017438">
    <property type="entry name" value="ATP-NAD_kinase_N"/>
</dbReference>
<dbReference type="InterPro" id="IPR005218">
    <property type="entry name" value="Diacylglycerol/lipid_kinase"/>
</dbReference>
<dbReference type="InterPro" id="IPR001206">
    <property type="entry name" value="Diacylglycerol_kinase_cat_dom"/>
</dbReference>
<dbReference type="InterPro" id="IPR022433">
    <property type="entry name" value="Lip_kinase_YegS"/>
</dbReference>
<dbReference type="InterPro" id="IPR050187">
    <property type="entry name" value="Lipid_Phosphate_FormReg"/>
</dbReference>
<dbReference type="InterPro" id="IPR016064">
    <property type="entry name" value="NAD/diacylglycerol_kinase_sf"/>
</dbReference>
<dbReference type="InterPro" id="IPR045540">
    <property type="entry name" value="YegS/DAGK_C"/>
</dbReference>
<dbReference type="NCBIfam" id="NF009602">
    <property type="entry name" value="PRK13054.1"/>
    <property type="match status" value="1"/>
</dbReference>
<dbReference type="NCBIfam" id="TIGR00147">
    <property type="entry name" value="YegS/Rv2252/BmrU family lipid kinase"/>
    <property type="match status" value="1"/>
</dbReference>
<dbReference type="PANTHER" id="PTHR12358:SF106">
    <property type="entry name" value="LIPID KINASE YEGS"/>
    <property type="match status" value="1"/>
</dbReference>
<dbReference type="PANTHER" id="PTHR12358">
    <property type="entry name" value="SPHINGOSINE KINASE"/>
    <property type="match status" value="1"/>
</dbReference>
<dbReference type="Pfam" id="PF00781">
    <property type="entry name" value="DAGK_cat"/>
    <property type="match status" value="1"/>
</dbReference>
<dbReference type="Pfam" id="PF19279">
    <property type="entry name" value="YegS_C"/>
    <property type="match status" value="1"/>
</dbReference>
<dbReference type="SMART" id="SM00046">
    <property type="entry name" value="DAGKc"/>
    <property type="match status" value="1"/>
</dbReference>
<dbReference type="SUPFAM" id="SSF111331">
    <property type="entry name" value="NAD kinase/diacylglycerol kinase-like"/>
    <property type="match status" value="1"/>
</dbReference>
<dbReference type="PROSITE" id="PS50146">
    <property type="entry name" value="DAGK"/>
    <property type="match status" value="1"/>
</dbReference>
<comment type="function">
    <text evidence="1">Probably phosphorylates lipids; the in vivo substrate is unknown.</text>
</comment>
<comment type="cofactor">
    <cofactor evidence="1">
        <name>Mg(2+)</name>
        <dbReference type="ChEBI" id="CHEBI:18420"/>
    </cofactor>
    <cofactor evidence="1">
        <name>Ca(2+)</name>
        <dbReference type="ChEBI" id="CHEBI:29108"/>
    </cofactor>
    <text evidence="1">Binds 1 Mg(2+) ion per subunit. Ca(2+) may be able to substitute.</text>
</comment>
<comment type="subcellular location">
    <subcellularLocation>
        <location evidence="1">Cytoplasm</location>
    </subcellularLocation>
</comment>
<comment type="similarity">
    <text evidence="1">Belongs to the diacylglycerol/lipid kinase family. YegS lipid kinase subfamily.</text>
</comment>
<accession>Q081R7</accession>
<feature type="chain" id="PRO_0000292158" description="Probable lipid kinase YegS-like">
    <location>
        <begin position="1"/>
        <end position="309"/>
    </location>
</feature>
<feature type="domain" description="DAGKc" evidence="1">
    <location>
        <begin position="1"/>
        <end position="133"/>
    </location>
</feature>
<feature type="active site" description="Proton acceptor" evidence="1">
    <location>
        <position position="273"/>
    </location>
</feature>
<feature type="binding site" evidence="1">
    <location>
        <position position="39"/>
    </location>
    <ligand>
        <name>ATP</name>
        <dbReference type="ChEBI" id="CHEBI:30616"/>
    </ligand>
</feature>
<feature type="binding site" evidence="1">
    <location>
        <begin position="65"/>
        <end position="71"/>
    </location>
    <ligand>
        <name>ATP</name>
        <dbReference type="ChEBI" id="CHEBI:30616"/>
    </ligand>
</feature>
<feature type="binding site" evidence="1">
    <location>
        <position position="95"/>
    </location>
    <ligand>
        <name>ATP</name>
        <dbReference type="ChEBI" id="CHEBI:30616"/>
    </ligand>
</feature>
<feature type="binding site" evidence="1">
    <location>
        <position position="214"/>
    </location>
    <ligand>
        <name>Mg(2+)</name>
        <dbReference type="ChEBI" id="CHEBI:18420"/>
    </ligand>
</feature>
<feature type="binding site" evidence="1">
    <location>
        <position position="217"/>
    </location>
    <ligand>
        <name>Mg(2+)</name>
        <dbReference type="ChEBI" id="CHEBI:18420"/>
    </ligand>
</feature>
<feature type="binding site" evidence="1">
    <location>
        <position position="219"/>
    </location>
    <ligand>
        <name>Mg(2+)</name>
        <dbReference type="ChEBI" id="CHEBI:18420"/>
    </ligand>
</feature>
<protein>
    <recommendedName>
        <fullName evidence="1">Probable lipid kinase YegS-like</fullName>
        <ecNumber evidence="1">2.7.1.-</ecNumber>
    </recommendedName>
</protein>
<name>YEGS_SHEFN</name>
<organism>
    <name type="scientific">Shewanella frigidimarina (strain NCIMB 400)</name>
    <dbReference type="NCBI Taxonomy" id="318167"/>
    <lineage>
        <taxon>Bacteria</taxon>
        <taxon>Pseudomonadati</taxon>
        <taxon>Pseudomonadota</taxon>
        <taxon>Gammaproteobacteria</taxon>
        <taxon>Alteromonadales</taxon>
        <taxon>Shewanellaceae</taxon>
        <taxon>Shewanella</taxon>
    </lineage>
</organism>
<keyword id="KW-0067">ATP-binding</keyword>
<keyword id="KW-0963">Cytoplasm</keyword>
<keyword id="KW-0418">Kinase</keyword>
<keyword id="KW-0444">Lipid biosynthesis</keyword>
<keyword id="KW-0443">Lipid metabolism</keyword>
<keyword id="KW-0460">Magnesium</keyword>
<keyword id="KW-0479">Metal-binding</keyword>
<keyword id="KW-0547">Nucleotide-binding</keyword>
<keyword id="KW-0594">Phospholipid biosynthesis</keyword>
<keyword id="KW-1208">Phospholipid metabolism</keyword>
<keyword id="KW-1185">Reference proteome</keyword>
<keyword id="KW-0808">Transferase</keyword>
<gene>
    <name type="ordered locus">Sfri_2152</name>
</gene>